<feature type="chain" id="PRO_0000085545" description="Azurin-2">
    <location>
        <begin position="1"/>
        <end position="129"/>
    </location>
</feature>
<feature type="domain" description="Plastocyanin-like">
    <location>
        <begin position="1"/>
        <end position="129"/>
    </location>
</feature>
<feature type="binding site" evidence="1">
    <location>
        <position position="46"/>
    </location>
    <ligand>
        <name>Cu cation</name>
        <dbReference type="ChEBI" id="CHEBI:23378"/>
    </ligand>
</feature>
<feature type="binding site" evidence="1">
    <location>
        <position position="112"/>
    </location>
    <ligand>
        <name>Cu cation</name>
        <dbReference type="ChEBI" id="CHEBI:23378"/>
    </ligand>
</feature>
<feature type="binding site" evidence="1">
    <location>
        <position position="117"/>
    </location>
    <ligand>
        <name>Cu cation</name>
        <dbReference type="ChEBI" id="CHEBI:23378"/>
    </ligand>
</feature>
<feature type="binding site" evidence="1">
    <location>
        <position position="121"/>
    </location>
    <ligand>
        <name>Cu cation</name>
        <dbReference type="ChEBI" id="CHEBI:23378"/>
    </ligand>
</feature>
<feature type="disulfide bond">
    <location>
        <begin position="3"/>
        <end position="26"/>
    </location>
</feature>
<feature type="strand" evidence="2">
    <location>
        <begin position="2"/>
        <end position="9"/>
    </location>
</feature>
<feature type="strand" evidence="2">
    <location>
        <begin position="18"/>
        <end position="22"/>
    </location>
</feature>
<feature type="strand" evidence="2">
    <location>
        <begin position="27"/>
        <end position="35"/>
    </location>
</feature>
<feature type="helix" evidence="2">
    <location>
        <begin position="41"/>
        <end position="44"/>
    </location>
</feature>
<feature type="strand" evidence="2">
    <location>
        <begin position="49"/>
        <end position="52"/>
    </location>
</feature>
<feature type="helix" evidence="2">
    <location>
        <begin position="53"/>
        <end position="55"/>
    </location>
</feature>
<feature type="helix" evidence="2">
    <location>
        <begin position="56"/>
        <end position="66"/>
    </location>
</feature>
<feature type="helix" evidence="2">
    <location>
        <begin position="68"/>
        <end position="70"/>
    </location>
</feature>
<feature type="strand" evidence="2">
    <location>
        <begin position="80"/>
        <end position="83"/>
    </location>
</feature>
<feature type="strand" evidence="2">
    <location>
        <begin position="92"/>
        <end position="98"/>
    </location>
</feature>
<feature type="helix" evidence="2">
    <location>
        <begin position="99"/>
        <end position="101"/>
    </location>
</feature>
<feature type="strand" evidence="2">
    <location>
        <begin position="108"/>
        <end position="111"/>
    </location>
</feature>
<feature type="helix" evidence="2">
    <location>
        <begin position="117"/>
        <end position="119"/>
    </location>
</feature>
<feature type="strand" evidence="2">
    <location>
        <begin position="121"/>
        <end position="127"/>
    </location>
</feature>
<sequence length="129" mass="13775">AQCEATVESNDAMQYNVKEIVVDKSCKQFTMHLKHVGKMAKVAMGHNLVLTKDADKQAVATDGMGAGLAQDYVKAGDTRVIAHTKVIGGGESDSVTFDVSKIAAGENYAYFCSFPGHWAMMKGTLKLGS</sequence>
<protein>
    <recommendedName>
        <fullName>Azurin-2</fullName>
    </recommendedName>
    <alternativeName>
        <fullName>AZN-2</fullName>
    </alternativeName>
    <alternativeName>
        <fullName>Azurin-II</fullName>
    </alternativeName>
</protein>
<dbReference type="PIR" id="A58648">
    <property type="entry name" value="A58648"/>
</dbReference>
<dbReference type="PDB" id="1DYZ">
    <property type="method" value="X-ray"/>
    <property type="resolution" value="1.75 A"/>
    <property type="chains" value="A=1-129"/>
</dbReference>
<dbReference type="PDB" id="1DZ0">
    <property type="method" value="X-ray"/>
    <property type="resolution" value="1.75 A"/>
    <property type="chains" value="A=1-129"/>
</dbReference>
<dbReference type="PDB" id="2CCW">
    <property type="method" value="X-ray"/>
    <property type="resolution" value="1.13 A"/>
    <property type="chains" value="A=1-129"/>
</dbReference>
<dbReference type="PDBsum" id="1DYZ"/>
<dbReference type="PDBsum" id="1DZ0"/>
<dbReference type="PDBsum" id="2CCW"/>
<dbReference type="SMR" id="P56275"/>
<dbReference type="eggNOG" id="COG3241">
    <property type="taxonomic scope" value="Bacteria"/>
</dbReference>
<dbReference type="EvolutionaryTrace" id="P56275"/>
<dbReference type="GO" id="GO:0042597">
    <property type="term" value="C:periplasmic space"/>
    <property type="evidence" value="ECO:0007669"/>
    <property type="project" value="UniProtKB-SubCell"/>
</dbReference>
<dbReference type="GO" id="GO:0005507">
    <property type="term" value="F:copper ion binding"/>
    <property type="evidence" value="ECO:0007669"/>
    <property type="project" value="InterPro"/>
</dbReference>
<dbReference type="GO" id="GO:0009055">
    <property type="term" value="F:electron transfer activity"/>
    <property type="evidence" value="ECO:0007669"/>
    <property type="project" value="InterPro"/>
</dbReference>
<dbReference type="CDD" id="cd13922">
    <property type="entry name" value="Azurin"/>
    <property type="match status" value="1"/>
</dbReference>
<dbReference type="FunFam" id="2.60.40.420:FF:000040">
    <property type="entry name" value="Azurin"/>
    <property type="match status" value="1"/>
</dbReference>
<dbReference type="Gene3D" id="2.60.40.420">
    <property type="entry name" value="Cupredoxins - blue copper proteins"/>
    <property type="match status" value="1"/>
</dbReference>
<dbReference type="InterPro" id="IPR014068">
    <property type="entry name" value="Azurin"/>
</dbReference>
<dbReference type="InterPro" id="IPR000923">
    <property type="entry name" value="BlueCu_1"/>
</dbReference>
<dbReference type="InterPro" id="IPR028871">
    <property type="entry name" value="BlueCu_1_BS"/>
</dbReference>
<dbReference type="InterPro" id="IPR050845">
    <property type="entry name" value="Cu-binding_ET"/>
</dbReference>
<dbReference type="InterPro" id="IPR008972">
    <property type="entry name" value="Cupredoxin"/>
</dbReference>
<dbReference type="NCBIfam" id="TIGR02695">
    <property type="entry name" value="azurin"/>
    <property type="match status" value="1"/>
</dbReference>
<dbReference type="PANTHER" id="PTHR38439">
    <property type="entry name" value="AURACYANIN-B"/>
    <property type="match status" value="1"/>
</dbReference>
<dbReference type="PANTHER" id="PTHR38439:SF2">
    <property type="entry name" value="OUTER MEMBRANE PROTEIN H.8"/>
    <property type="match status" value="1"/>
</dbReference>
<dbReference type="Pfam" id="PF00127">
    <property type="entry name" value="Copper-bind"/>
    <property type="match status" value="1"/>
</dbReference>
<dbReference type="SUPFAM" id="SSF49503">
    <property type="entry name" value="Cupredoxins"/>
    <property type="match status" value="1"/>
</dbReference>
<dbReference type="PROSITE" id="PS00196">
    <property type="entry name" value="COPPER_BLUE"/>
    <property type="match status" value="1"/>
</dbReference>
<organism>
    <name type="scientific">Alcaligenes xylosoxydans xylosoxydans</name>
    <name type="common">Achromobacter xylosoxidans</name>
    <dbReference type="NCBI Taxonomy" id="85698"/>
    <lineage>
        <taxon>Bacteria</taxon>
        <taxon>Pseudomonadati</taxon>
        <taxon>Pseudomonadota</taxon>
        <taxon>Betaproteobacteria</taxon>
        <taxon>Burkholderiales</taxon>
        <taxon>Alcaligenaceae</taxon>
        <taxon>Achromobacter</taxon>
    </lineage>
</organism>
<keyword id="KW-0002">3D-structure</keyword>
<keyword id="KW-0186">Copper</keyword>
<keyword id="KW-0903">Direct protein sequencing</keyword>
<keyword id="KW-1015">Disulfide bond</keyword>
<keyword id="KW-0249">Electron transport</keyword>
<keyword id="KW-0479">Metal-binding</keyword>
<keyword id="KW-0574">Periplasm</keyword>
<keyword id="KW-0813">Transport</keyword>
<accession>P56275</accession>
<evidence type="ECO:0000269" key="1">
    <source>
    </source>
</evidence>
<evidence type="ECO:0007829" key="2">
    <source>
        <dbReference type="PDB" id="2CCW"/>
    </source>
</evidence>
<comment type="function">
    <text>Transfers electrons from cytochrome c551 to cytochrome oxidase.</text>
</comment>
<comment type="subcellular location">
    <subcellularLocation>
        <location>Periplasm</location>
    </subcellularLocation>
</comment>
<proteinExistence type="evidence at protein level"/>
<name>AZUR2_ALCXX</name>
<reference key="1">
    <citation type="journal article" date="1995" name="Biochemistry">
        <title>Evidence for two distinct azurins in Alcaligenes xylosoxidans (NCIMB 11015): potential electron donors to nitrite reductase.</title>
        <authorList>
            <person name="Dodd F.E."/>
            <person name="Hasnain S.S."/>
            <person name="Hunter W.N."/>
            <person name="Abraham Z.H."/>
            <person name="Debenham M."/>
            <person name="Kanzler H."/>
            <person name="Eldridge M."/>
            <person name="Eady R.R."/>
            <person name="Ambler R.P."/>
            <person name="Smith B.E."/>
        </authorList>
    </citation>
    <scope>PROTEIN SEQUENCE</scope>
    <source>
        <strain>LMG 1865 / CCUG 61957 / NCIMB 11015 / Iwasaki</strain>
    </source>
</reference>
<reference key="2">
    <citation type="journal article" date="1995" name="Acta Crystallogr. D">
        <title>Structure of a new azurin from the denitrifying bacterium Alcaligenes xylosoxidans at high resolution.</title>
        <authorList>
            <person name="Dodd F.E."/>
            <person name="Hasnain S.S."/>
            <person name="Eady R.R."/>
            <person name="Smith B.E."/>
        </authorList>
    </citation>
    <scope>X-RAY CRYSTALLOGRAPHY (2.1 ANGSTROMS)</scope>
</reference>
<reference key="3">
    <citation type="journal article" date="2000" name="Acta Crystallogr. D">
        <title>Structures of oxidized and reduced azurin II from Alcaligenes xylosoxidans at 1.75-A resolution.</title>
        <authorList>
            <person name="Dodd F.E."/>
            <person name="Abraham Z.H."/>
            <person name="Eady R.R."/>
            <person name="Hasnain S.S."/>
        </authorList>
    </citation>
    <scope>X-RAY CRYSTALLOGRAPHY (1.75 ANGSTROMS)</scope>
</reference>